<name>ACDH_RHIR8</name>
<gene>
    <name type="ordered locus">Arad_7256</name>
</gene>
<proteinExistence type="inferred from homology"/>
<accession>B9JML7</accession>
<evidence type="ECO:0000255" key="1">
    <source>
        <dbReference type="HAMAP-Rule" id="MF_01657"/>
    </source>
</evidence>
<feature type="chain" id="PRO_0000387615" description="Acetaldehyde dehydrogenase">
    <location>
        <begin position="1"/>
        <end position="313"/>
    </location>
</feature>
<feature type="active site" description="Acyl-thioester intermediate" evidence="1">
    <location>
        <position position="133"/>
    </location>
</feature>
<feature type="binding site" evidence="1">
    <location>
        <begin position="15"/>
        <end position="18"/>
    </location>
    <ligand>
        <name>NAD(+)</name>
        <dbReference type="ChEBI" id="CHEBI:57540"/>
    </ligand>
</feature>
<feature type="binding site" evidence="1">
    <location>
        <begin position="164"/>
        <end position="172"/>
    </location>
    <ligand>
        <name>NAD(+)</name>
        <dbReference type="ChEBI" id="CHEBI:57540"/>
    </ligand>
</feature>
<feature type="binding site" evidence="1">
    <location>
        <position position="289"/>
    </location>
    <ligand>
        <name>NAD(+)</name>
        <dbReference type="ChEBI" id="CHEBI:57540"/>
    </ligand>
</feature>
<sequence>MERTMTPIKAAIIGSGNIGTDLMIKILRTGSGIEMGALVGVDPASDGLERARRLGVFTTHEGLDGLRRSPIYKDIGIVFDATSAKAHERHAEQLRQDGKRAIDLTPAAVGPYIVPVVNLEENLNAVNVNMVTCGGQATIPIVAAVARVAPVPYAEIVASIASRSAGPGTRANIDEFTETTARAIEVVGGARRGKAIIVLNPAEPPLIMRDTVYCLALTQDQDAVRRSIHDMIDRVRGYVPGYRLKQEVQFEPLRDARAVGGEEDGPALKVSVFLEVEGAGHYLPSYAGNLDIMTSAALAVAERFARTLIEENA</sequence>
<reference key="1">
    <citation type="journal article" date="2009" name="J. Bacteriol.">
        <title>Genome sequences of three Agrobacterium biovars help elucidate the evolution of multichromosome genomes in bacteria.</title>
        <authorList>
            <person name="Slater S.C."/>
            <person name="Goldman B.S."/>
            <person name="Goodner B."/>
            <person name="Setubal J.C."/>
            <person name="Farrand S.K."/>
            <person name="Nester E.W."/>
            <person name="Burr T.J."/>
            <person name="Banta L."/>
            <person name="Dickerman A.W."/>
            <person name="Paulsen I."/>
            <person name="Otten L."/>
            <person name="Suen G."/>
            <person name="Welch R."/>
            <person name="Almeida N.F."/>
            <person name="Arnold F."/>
            <person name="Burton O.T."/>
            <person name="Du Z."/>
            <person name="Ewing A."/>
            <person name="Godsy E."/>
            <person name="Heisel S."/>
            <person name="Houmiel K.L."/>
            <person name="Jhaveri J."/>
            <person name="Lu J."/>
            <person name="Miller N.M."/>
            <person name="Norton S."/>
            <person name="Chen Q."/>
            <person name="Phoolcharoen W."/>
            <person name="Ohlin V."/>
            <person name="Ondrusek D."/>
            <person name="Pride N."/>
            <person name="Stricklin S.L."/>
            <person name="Sun J."/>
            <person name="Wheeler C."/>
            <person name="Wilson L."/>
            <person name="Zhu H."/>
            <person name="Wood D.W."/>
        </authorList>
    </citation>
    <scope>NUCLEOTIDE SEQUENCE [LARGE SCALE GENOMIC DNA]</scope>
    <source>
        <strain>K84 / ATCC BAA-868</strain>
    </source>
</reference>
<keyword id="KW-0058">Aromatic hydrocarbons catabolism</keyword>
<keyword id="KW-0520">NAD</keyword>
<keyword id="KW-0560">Oxidoreductase</keyword>
<organism>
    <name type="scientific">Rhizobium rhizogenes (strain K84 / ATCC BAA-868)</name>
    <name type="common">Agrobacterium radiobacter</name>
    <dbReference type="NCBI Taxonomy" id="311403"/>
    <lineage>
        <taxon>Bacteria</taxon>
        <taxon>Pseudomonadati</taxon>
        <taxon>Pseudomonadota</taxon>
        <taxon>Alphaproteobacteria</taxon>
        <taxon>Hyphomicrobiales</taxon>
        <taxon>Rhizobiaceae</taxon>
        <taxon>Rhizobium/Agrobacterium group</taxon>
        <taxon>Rhizobium</taxon>
    </lineage>
</organism>
<protein>
    <recommendedName>
        <fullName evidence="1">Acetaldehyde dehydrogenase</fullName>
        <ecNumber evidence="1">1.2.1.10</ecNumber>
    </recommendedName>
    <alternativeName>
        <fullName evidence="1">Acetaldehyde dehydrogenase [acetylating]</fullName>
    </alternativeName>
</protein>
<dbReference type="EC" id="1.2.1.10" evidence="1"/>
<dbReference type="EMBL" id="CP000629">
    <property type="protein sequence ID" value="ACM28798.1"/>
    <property type="molecule type" value="Genomic_DNA"/>
</dbReference>
<dbReference type="SMR" id="B9JML7"/>
<dbReference type="STRING" id="311403.Arad_7256"/>
<dbReference type="KEGG" id="ara:Arad_7256"/>
<dbReference type="eggNOG" id="COG4569">
    <property type="taxonomic scope" value="Bacteria"/>
</dbReference>
<dbReference type="HOGENOM" id="CLU_062208_0_0_5"/>
<dbReference type="Proteomes" id="UP000001600">
    <property type="component" value="Chromosome 2"/>
</dbReference>
<dbReference type="GO" id="GO:0008774">
    <property type="term" value="F:acetaldehyde dehydrogenase (acetylating) activity"/>
    <property type="evidence" value="ECO:0007669"/>
    <property type="project" value="UniProtKB-UniRule"/>
</dbReference>
<dbReference type="GO" id="GO:0051287">
    <property type="term" value="F:NAD binding"/>
    <property type="evidence" value="ECO:0007669"/>
    <property type="project" value="UniProtKB-UniRule"/>
</dbReference>
<dbReference type="GO" id="GO:0009056">
    <property type="term" value="P:catabolic process"/>
    <property type="evidence" value="ECO:0007669"/>
    <property type="project" value="UniProtKB-KW"/>
</dbReference>
<dbReference type="CDD" id="cd23933">
    <property type="entry name" value="ALDH_C"/>
    <property type="match status" value="1"/>
</dbReference>
<dbReference type="Gene3D" id="3.30.360.10">
    <property type="entry name" value="Dihydrodipicolinate Reductase, domain 2"/>
    <property type="match status" value="1"/>
</dbReference>
<dbReference type="Gene3D" id="3.40.50.720">
    <property type="entry name" value="NAD(P)-binding Rossmann-like Domain"/>
    <property type="match status" value="1"/>
</dbReference>
<dbReference type="HAMAP" id="MF_01657">
    <property type="entry name" value="Ac_ald_DH_ac"/>
    <property type="match status" value="1"/>
</dbReference>
<dbReference type="InterPro" id="IPR003361">
    <property type="entry name" value="Acetaldehyde_dehydrogenase"/>
</dbReference>
<dbReference type="InterPro" id="IPR015426">
    <property type="entry name" value="Acetylaldehyde_DH_C"/>
</dbReference>
<dbReference type="InterPro" id="IPR036291">
    <property type="entry name" value="NAD(P)-bd_dom_sf"/>
</dbReference>
<dbReference type="InterPro" id="IPR000534">
    <property type="entry name" value="Semialdehyde_DH_NAD-bd"/>
</dbReference>
<dbReference type="NCBIfam" id="TIGR03215">
    <property type="entry name" value="ac_ald_DH_ac"/>
    <property type="match status" value="1"/>
</dbReference>
<dbReference type="NCBIfam" id="NF006157">
    <property type="entry name" value="PRK08300.1"/>
    <property type="match status" value="1"/>
</dbReference>
<dbReference type="Pfam" id="PF09290">
    <property type="entry name" value="AcetDehyd-dimer"/>
    <property type="match status" value="1"/>
</dbReference>
<dbReference type="Pfam" id="PF01118">
    <property type="entry name" value="Semialdhyde_dh"/>
    <property type="match status" value="1"/>
</dbReference>
<dbReference type="PIRSF" id="PIRSF015689">
    <property type="entry name" value="Actaldh_dh_actl"/>
    <property type="match status" value="1"/>
</dbReference>
<dbReference type="SMART" id="SM00859">
    <property type="entry name" value="Semialdhyde_dh"/>
    <property type="match status" value="1"/>
</dbReference>
<dbReference type="SUPFAM" id="SSF55347">
    <property type="entry name" value="Glyceraldehyde-3-phosphate dehydrogenase-like, C-terminal domain"/>
    <property type="match status" value="1"/>
</dbReference>
<dbReference type="SUPFAM" id="SSF51735">
    <property type="entry name" value="NAD(P)-binding Rossmann-fold domains"/>
    <property type="match status" value="1"/>
</dbReference>
<comment type="catalytic activity">
    <reaction evidence="1">
        <text>acetaldehyde + NAD(+) + CoA = acetyl-CoA + NADH + H(+)</text>
        <dbReference type="Rhea" id="RHEA:23288"/>
        <dbReference type="ChEBI" id="CHEBI:15343"/>
        <dbReference type="ChEBI" id="CHEBI:15378"/>
        <dbReference type="ChEBI" id="CHEBI:57287"/>
        <dbReference type="ChEBI" id="CHEBI:57288"/>
        <dbReference type="ChEBI" id="CHEBI:57540"/>
        <dbReference type="ChEBI" id="CHEBI:57945"/>
        <dbReference type="EC" id="1.2.1.10"/>
    </reaction>
</comment>
<comment type="similarity">
    <text evidence="1">Belongs to the acetaldehyde dehydrogenase family.</text>
</comment>